<proteinExistence type="inferred from homology"/>
<organism>
    <name type="scientific">Idiomarina loihiensis (strain ATCC BAA-735 / DSM 15497 / L2-TR)</name>
    <dbReference type="NCBI Taxonomy" id="283942"/>
    <lineage>
        <taxon>Bacteria</taxon>
        <taxon>Pseudomonadati</taxon>
        <taxon>Pseudomonadota</taxon>
        <taxon>Gammaproteobacteria</taxon>
        <taxon>Alteromonadales</taxon>
        <taxon>Idiomarinaceae</taxon>
        <taxon>Idiomarina</taxon>
    </lineage>
</organism>
<sequence length="642" mass="69403">MGKTIGIDLGTTNSCVAVLDGGKARVIENGEGDRTTPSVVAFTDDGEILVGSPAKRQAVTNPNKTLFAIKRLIGRRFQDEEVQRDIGIMPYKIVKADNGDAWVEIDGDKKAPPQISAEVLKKMKKTAEEFLGEKVTDAVITVPAYFNDAQRQATKDAGKIAGLNVKRIINEPTAAALAYGMDKKSGDNVIAVYDLGGGTFDISIIEIDEVEGEHTFEVLATNGDTHLGGEDFDNRLINYLVEQFQKDQGMDLRKDPLAMQRLKEAAEKAKIELSSAQQTEVNLPYITADNAGPKHMAIKVTRAKLESLVEDLIKKSLEPLKQALADADLSVSDIQDIIMVGGQTRMPKVQAAVTDFFGKEPRRDVNPDEAVAVGAAVQAGVLQGDVKDVLLLDVCPLSLGIETMGGVMTKLIEKNTTIPTKESQTFSTAEDNQSAVTIHVIQGERKRAGDNKSLGQFNLEGIRAAARGVPQIEVTFDIDADGILHVSAKDKDTGKEQKITIKASSGLDESEVDKMVKDAEAHAEEDKKFEEMVQARNQADGLVHATRNQLKEVGDALSQEDKDAIEKACEELEQASKDGDKEAIDAKSQALMEASQKLMEAAQQQQAQQGAEGAAGGEQQSSKADDDVVDAEFEEVKDDDKK</sequence>
<accession>Q5QXL1</accession>
<dbReference type="EMBL" id="AE017340">
    <property type="protein sequence ID" value="AAV81826.1"/>
    <property type="molecule type" value="Genomic_DNA"/>
</dbReference>
<dbReference type="RefSeq" id="WP_011234237.1">
    <property type="nucleotide sequence ID" value="NC_006512.1"/>
</dbReference>
<dbReference type="SMR" id="Q5QXL1"/>
<dbReference type="STRING" id="283942.IL0986"/>
<dbReference type="GeneID" id="41336148"/>
<dbReference type="KEGG" id="ilo:IL0986"/>
<dbReference type="eggNOG" id="COG0443">
    <property type="taxonomic scope" value="Bacteria"/>
</dbReference>
<dbReference type="HOGENOM" id="CLU_005965_2_1_6"/>
<dbReference type="OrthoDB" id="9766019at2"/>
<dbReference type="Proteomes" id="UP000001171">
    <property type="component" value="Chromosome"/>
</dbReference>
<dbReference type="GO" id="GO:0005524">
    <property type="term" value="F:ATP binding"/>
    <property type="evidence" value="ECO:0007669"/>
    <property type="project" value="UniProtKB-UniRule"/>
</dbReference>
<dbReference type="GO" id="GO:0140662">
    <property type="term" value="F:ATP-dependent protein folding chaperone"/>
    <property type="evidence" value="ECO:0007669"/>
    <property type="project" value="InterPro"/>
</dbReference>
<dbReference type="GO" id="GO:0051082">
    <property type="term" value="F:unfolded protein binding"/>
    <property type="evidence" value="ECO:0007669"/>
    <property type="project" value="InterPro"/>
</dbReference>
<dbReference type="CDD" id="cd10234">
    <property type="entry name" value="ASKHA_NBD_HSP70_DnaK-like"/>
    <property type="match status" value="1"/>
</dbReference>
<dbReference type="FunFam" id="2.60.34.10:FF:000014">
    <property type="entry name" value="Chaperone protein DnaK HSP70"/>
    <property type="match status" value="1"/>
</dbReference>
<dbReference type="FunFam" id="3.30.30.30:FF:000003">
    <property type="entry name" value="Heat shock protein 9"/>
    <property type="match status" value="1"/>
</dbReference>
<dbReference type="FunFam" id="1.20.1270.10:FF:000001">
    <property type="entry name" value="Molecular chaperone DnaK"/>
    <property type="match status" value="1"/>
</dbReference>
<dbReference type="FunFam" id="3.30.420.40:FF:000004">
    <property type="entry name" value="Molecular chaperone DnaK"/>
    <property type="match status" value="1"/>
</dbReference>
<dbReference type="FunFam" id="3.90.640.10:FF:000003">
    <property type="entry name" value="Molecular chaperone DnaK"/>
    <property type="match status" value="1"/>
</dbReference>
<dbReference type="Gene3D" id="1.20.1270.10">
    <property type="match status" value="1"/>
</dbReference>
<dbReference type="Gene3D" id="3.30.420.40">
    <property type="match status" value="2"/>
</dbReference>
<dbReference type="Gene3D" id="3.90.640.10">
    <property type="entry name" value="Actin, Chain A, domain 4"/>
    <property type="match status" value="1"/>
</dbReference>
<dbReference type="Gene3D" id="2.60.34.10">
    <property type="entry name" value="Substrate Binding Domain Of DNAk, Chain A, domain 1"/>
    <property type="match status" value="1"/>
</dbReference>
<dbReference type="HAMAP" id="MF_00332">
    <property type="entry name" value="DnaK"/>
    <property type="match status" value="1"/>
</dbReference>
<dbReference type="InterPro" id="IPR043129">
    <property type="entry name" value="ATPase_NBD"/>
</dbReference>
<dbReference type="InterPro" id="IPR012725">
    <property type="entry name" value="Chaperone_DnaK"/>
</dbReference>
<dbReference type="InterPro" id="IPR018181">
    <property type="entry name" value="Heat_shock_70_CS"/>
</dbReference>
<dbReference type="InterPro" id="IPR029048">
    <property type="entry name" value="HSP70_C_sf"/>
</dbReference>
<dbReference type="InterPro" id="IPR029047">
    <property type="entry name" value="HSP70_peptide-bd_sf"/>
</dbReference>
<dbReference type="InterPro" id="IPR013126">
    <property type="entry name" value="Hsp_70_fam"/>
</dbReference>
<dbReference type="NCBIfam" id="NF001413">
    <property type="entry name" value="PRK00290.1"/>
    <property type="match status" value="1"/>
</dbReference>
<dbReference type="NCBIfam" id="NF003520">
    <property type="entry name" value="PRK05183.1"/>
    <property type="match status" value="1"/>
</dbReference>
<dbReference type="NCBIfam" id="TIGR02350">
    <property type="entry name" value="prok_dnaK"/>
    <property type="match status" value="1"/>
</dbReference>
<dbReference type="PANTHER" id="PTHR19375">
    <property type="entry name" value="HEAT SHOCK PROTEIN 70KDA"/>
    <property type="match status" value="1"/>
</dbReference>
<dbReference type="Pfam" id="PF00012">
    <property type="entry name" value="HSP70"/>
    <property type="match status" value="1"/>
</dbReference>
<dbReference type="PRINTS" id="PR00301">
    <property type="entry name" value="HEATSHOCK70"/>
</dbReference>
<dbReference type="SUPFAM" id="SSF53067">
    <property type="entry name" value="Actin-like ATPase domain"/>
    <property type="match status" value="2"/>
</dbReference>
<dbReference type="SUPFAM" id="SSF100934">
    <property type="entry name" value="Heat shock protein 70kD (HSP70), C-terminal subdomain"/>
    <property type="match status" value="1"/>
</dbReference>
<dbReference type="SUPFAM" id="SSF100920">
    <property type="entry name" value="Heat shock protein 70kD (HSP70), peptide-binding domain"/>
    <property type="match status" value="1"/>
</dbReference>
<dbReference type="PROSITE" id="PS00297">
    <property type="entry name" value="HSP70_1"/>
    <property type="match status" value="1"/>
</dbReference>
<dbReference type="PROSITE" id="PS00329">
    <property type="entry name" value="HSP70_2"/>
    <property type="match status" value="1"/>
</dbReference>
<dbReference type="PROSITE" id="PS01036">
    <property type="entry name" value="HSP70_3"/>
    <property type="match status" value="1"/>
</dbReference>
<protein>
    <recommendedName>
        <fullName evidence="1">Chaperone protein DnaK</fullName>
    </recommendedName>
    <alternativeName>
        <fullName evidence="1">HSP70</fullName>
    </alternativeName>
    <alternativeName>
        <fullName evidence="1">Heat shock 70 kDa protein</fullName>
    </alternativeName>
    <alternativeName>
        <fullName evidence="1">Heat shock protein 70</fullName>
    </alternativeName>
</protein>
<evidence type="ECO:0000255" key="1">
    <source>
        <dbReference type="HAMAP-Rule" id="MF_00332"/>
    </source>
</evidence>
<evidence type="ECO:0000256" key="2">
    <source>
        <dbReference type="SAM" id="MobiDB-lite"/>
    </source>
</evidence>
<gene>
    <name evidence="1" type="primary">dnaK</name>
    <name type="ordered locus">IL0986</name>
</gene>
<name>DNAK_IDILO</name>
<comment type="function">
    <text evidence="1">Acts as a chaperone.</text>
</comment>
<comment type="induction">
    <text evidence="1">By stress conditions e.g. heat shock.</text>
</comment>
<comment type="similarity">
    <text evidence="1">Belongs to the heat shock protein 70 family.</text>
</comment>
<keyword id="KW-0067">ATP-binding</keyword>
<keyword id="KW-0143">Chaperone</keyword>
<keyword id="KW-0547">Nucleotide-binding</keyword>
<keyword id="KW-0597">Phosphoprotein</keyword>
<keyword id="KW-1185">Reference proteome</keyword>
<keyword id="KW-0346">Stress response</keyword>
<reference key="1">
    <citation type="journal article" date="2004" name="Proc. Natl. Acad. Sci. U.S.A.">
        <title>Genome sequence of the deep-sea gamma-proteobacterium Idiomarina loihiensis reveals amino acid fermentation as a source of carbon and energy.</title>
        <authorList>
            <person name="Hou S."/>
            <person name="Saw J.H."/>
            <person name="Lee K.S."/>
            <person name="Freitas T.A."/>
            <person name="Belisle C."/>
            <person name="Kawarabayasi Y."/>
            <person name="Donachie S.P."/>
            <person name="Pikina A."/>
            <person name="Galperin M.Y."/>
            <person name="Koonin E.V."/>
            <person name="Makarova K.S."/>
            <person name="Omelchenko M.V."/>
            <person name="Sorokin A."/>
            <person name="Wolf Y.I."/>
            <person name="Li Q.X."/>
            <person name="Keum Y.S."/>
            <person name="Campbell S."/>
            <person name="Denery J."/>
            <person name="Aizawa S."/>
            <person name="Shibata S."/>
            <person name="Malahoff A."/>
            <person name="Alam M."/>
        </authorList>
    </citation>
    <scope>NUCLEOTIDE SEQUENCE [LARGE SCALE GENOMIC DNA]</scope>
    <source>
        <strain>ATCC BAA-735 / DSM 15497 / L2-TR</strain>
    </source>
</reference>
<feature type="chain" id="PRO_0000225970" description="Chaperone protein DnaK">
    <location>
        <begin position="1"/>
        <end position="642"/>
    </location>
</feature>
<feature type="region of interest" description="Disordered" evidence="2">
    <location>
        <begin position="570"/>
        <end position="642"/>
    </location>
</feature>
<feature type="compositionally biased region" description="Basic and acidic residues" evidence="2">
    <location>
        <begin position="570"/>
        <end position="585"/>
    </location>
</feature>
<feature type="compositionally biased region" description="Low complexity" evidence="2">
    <location>
        <begin position="600"/>
        <end position="620"/>
    </location>
</feature>
<feature type="compositionally biased region" description="Acidic residues" evidence="2">
    <location>
        <begin position="627"/>
        <end position="642"/>
    </location>
</feature>
<feature type="modified residue" description="Phosphothreonine; by autocatalysis" evidence="1">
    <location>
        <position position="199"/>
    </location>
</feature>